<accession>Q5HHF2</accession>
<reference key="1">
    <citation type="journal article" date="2005" name="J. Bacteriol.">
        <title>Insights on evolution of virulence and resistance from the complete genome analysis of an early methicillin-resistant Staphylococcus aureus strain and a biofilm-producing methicillin-resistant Staphylococcus epidermidis strain.</title>
        <authorList>
            <person name="Gill S.R."/>
            <person name="Fouts D.E."/>
            <person name="Archer G.L."/>
            <person name="Mongodin E.F."/>
            <person name="DeBoy R.T."/>
            <person name="Ravel J."/>
            <person name="Paulsen I.T."/>
            <person name="Kolonay J.F."/>
            <person name="Brinkac L.M."/>
            <person name="Beanan M.J."/>
            <person name="Dodson R.J."/>
            <person name="Daugherty S.C."/>
            <person name="Madupu R."/>
            <person name="Angiuoli S.V."/>
            <person name="Durkin A.S."/>
            <person name="Haft D.H."/>
            <person name="Vamathevan J.J."/>
            <person name="Khouri H."/>
            <person name="Utterback T.R."/>
            <person name="Lee C."/>
            <person name="Dimitrov G."/>
            <person name="Jiang L."/>
            <person name="Qin H."/>
            <person name="Weidman J."/>
            <person name="Tran K."/>
            <person name="Kang K.H."/>
            <person name="Hance I.R."/>
            <person name="Nelson K.E."/>
            <person name="Fraser C.M."/>
        </authorList>
    </citation>
    <scope>NUCLEOTIDE SEQUENCE [LARGE SCALE GENOMIC DNA]</scope>
    <source>
        <strain>COL</strain>
    </source>
</reference>
<name>DLTA_STAAC</name>
<feature type="chain" id="PRO_0000213149" description="D-alanine--D-alanyl carrier protein ligase">
    <location>
        <begin position="1"/>
        <end position="485"/>
    </location>
</feature>
<feature type="binding site" evidence="1">
    <location>
        <begin position="144"/>
        <end position="145"/>
    </location>
    <ligand>
        <name>ATP</name>
        <dbReference type="ChEBI" id="CHEBI:30616"/>
    </ligand>
</feature>
<feature type="binding site" evidence="1">
    <location>
        <position position="189"/>
    </location>
    <ligand>
        <name>D-alanine</name>
        <dbReference type="ChEBI" id="CHEBI:57416"/>
    </ligand>
</feature>
<feature type="binding site" evidence="1">
    <location>
        <begin position="284"/>
        <end position="289"/>
    </location>
    <ligand>
        <name>ATP</name>
        <dbReference type="ChEBI" id="CHEBI:30616"/>
    </ligand>
</feature>
<feature type="binding site" evidence="1">
    <location>
        <position position="293"/>
    </location>
    <ligand>
        <name>D-alanine</name>
        <dbReference type="ChEBI" id="CHEBI:57416"/>
    </ligand>
</feature>
<feature type="binding site" evidence="1">
    <location>
        <position position="365"/>
    </location>
    <ligand>
        <name>ATP</name>
        <dbReference type="ChEBI" id="CHEBI:30616"/>
    </ligand>
</feature>
<feature type="binding site" evidence="1">
    <location>
        <position position="473"/>
    </location>
    <ligand>
        <name>ATP</name>
        <dbReference type="ChEBI" id="CHEBI:30616"/>
    </ligand>
</feature>
<feature type="binding site" evidence="1">
    <location>
        <position position="473"/>
    </location>
    <ligand>
        <name>D-alanine</name>
        <dbReference type="ChEBI" id="CHEBI:57416"/>
    </ligand>
</feature>
<gene>
    <name evidence="1" type="primary">dltA</name>
    <name type="ordered locus">SACOL0935</name>
</gene>
<keyword id="KW-0067">ATP-binding</keyword>
<keyword id="KW-0963">Cytoplasm</keyword>
<keyword id="KW-0436">Ligase</keyword>
<keyword id="KW-0547">Nucleotide-binding</keyword>
<protein>
    <recommendedName>
        <fullName evidence="1">D-alanine--D-alanyl carrier protein ligase</fullName>
        <shortName evidence="1">DCL</shortName>
        <ecNumber evidence="1">6.2.1.54</ecNumber>
    </recommendedName>
    <alternativeName>
        <fullName evidence="1">D-alanine--poly(phosphoribitol) ligase subunit 1</fullName>
    </alternativeName>
    <alternativeName>
        <fullName evidence="1">D-alanine-activating enzyme</fullName>
        <shortName evidence="1">DAE</shortName>
    </alternativeName>
</protein>
<organism>
    <name type="scientific">Staphylococcus aureus (strain COL)</name>
    <dbReference type="NCBI Taxonomy" id="93062"/>
    <lineage>
        <taxon>Bacteria</taxon>
        <taxon>Bacillati</taxon>
        <taxon>Bacillota</taxon>
        <taxon>Bacilli</taxon>
        <taxon>Bacillales</taxon>
        <taxon>Staphylococcaceae</taxon>
        <taxon>Staphylococcus</taxon>
    </lineage>
</organism>
<evidence type="ECO:0000255" key="1">
    <source>
        <dbReference type="HAMAP-Rule" id="MF_00593"/>
    </source>
</evidence>
<dbReference type="EC" id="6.2.1.54" evidence="1"/>
<dbReference type="EMBL" id="CP000046">
    <property type="protein sequence ID" value="AAW37904.1"/>
    <property type="molecule type" value="Genomic_DNA"/>
</dbReference>
<dbReference type="RefSeq" id="WP_000129653.1">
    <property type="nucleotide sequence ID" value="NZ_JBGOFO010000002.1"/>
</dbReference>
<dbReference type="SMR" id="Q5HHF2"/>
<dbReference type="KEGG" id="sac:SACOL0935"/>
<dbReference type="HOGENOM" id="CLU_000022_2_12_9"/>
<dbReference type="UniPathway" id="UPA00556"/>
<dbReference type="Proteomes" id="UP000000530">
    <property type="component" value="Chromosome"/>
</dbReference>
<dbReference type="GO" id="GO:0005737">
    <property type="term" value="C:cytoplasm"/>
    <property type="evidence" value="ECO:0007669"/>
    <property type="project" value="UniProtKB-SubCell"/>
</dbReference>
<dbReference type="GO" id="GO:0005524">
    <property type="term" value="F:ATP binding"/>
    <property type="evidence" value="ECO:0007669"/>
    <property type="project" value="UniProtKB-KW"/>
</dbReference>
<dbReference type="GO" id="GO:0047473">
    <property type="term" value="F:D-alanine [D-alanyl carrier protein] ligase activity"/>
    <property type="evidence" value="ECO:0007669"/>
    <property type="project" value="UniProtKB-UniRule"/>
</dbReference>
<dbReference type="GO" id="GO:0070395">
    <property type="term" value="P:lipoteichoic acid biosynthetic process"/>
    <property type="evidence" value="ECO:0007669"/>
    <property type="project" value="UniProtKB-UniRule"/>
</dbReference>
<dbReference type="CDD" id="cd05945">
    <property type="entry name" value="DltA"/>
    <property type="match status" value="1"/>
</dbReference>
<dbReference type="FunFam" id="3.30.300.30:FF:000012">
    <property type="entry name" value="D-alanine--D-alanyl carrier protein ligase"/>
    <property type="match status" value="1"/>
</dbReference>
<dbReference type="Gene3D" id="3.30.300.30">
    <property type="match status" value="1"/>
</dbReference>
<dbReference type="Gene3D" id="3.40.50.12780">
    <property type="entry name" value="N-terminal domain of ligase-like"/>
    <property type="match status" value="1"/>
</dbReference>
<dbReference type="HAMAP" id="MF_00593">
    <property type="entry name" value="DltA"/>
    <property type="match status" value="1"/>
</dbReference>
<dbReference type="InterPro" id="IPR010071">
    <property type="entry name" value="AA_adenyl_dom"/>
</dbReference>
<dbReference type="InterPro" id="IPR025110">
    <property type="entry name" value="AMP-bd_C"/>
</dbReference>
<dbReference type="InterPro" id="IPR045851">
    <property type="entry name" value="AMP-bd_C_sf"/>
</dbReference>
<dbReference type="InterPro" id="IPR000873">
    <property type="entry name" value="AMP-dep_synth/lig_dom"/>
</dbReference>
<dbReference type="InterPro" id="IPR042099">
    <property type="entry name" value="ANL_N_sf"/>
</dbReference>
<dbReference type="InterPro" id="IPR010072">
    <property type="entry name" value="DltA"/>
</dbReference>
<dbReference type="InterPro" id="IPR044507">
    <property type="entry name" value="DltA-like"/>
</dbReference>
<dbReference type="NCBIfam" id="TIGR01733">
    <property type="entry name" value="AA-adenyl-dom"/>
    <property type="match status" value="1"/>
</dbReference>
<dbReference type="NCBIfam" id="TIGR01734">
    <property type="entry name" value="D-ala-DACP-lig"/>
    <property type="match status" value="1"/>
</dbReference>
<dbReference type="NCBIfam" id="NF003417">
    <property type="entry name" value="PRK04813.1"/>
    <property type="match status" value="1"/>
</dbReference>
<dbReference type="PANTHER" id="PTHR45398">
    <property type="match status" value="1"/>
</dbReference>
<dbReference type="PANTHER" id="PTHR45398:SF1">
    <property type="entry name" value="ENZYME, PUTATIVE (JCVI)-RELATED"/>
    <property type="match status" value="1"/>
</dbReference>
<dbReference type="Pfam" id="PF00501">
    <property type="entry name" value="AMP-binding"/>
    <property type="match status" value="1"/>
</dbReference>
<dbReference type="Pfam" id="PF13193">
    <property type="entry name" value="AMP-binding_C"/>
    <property type="match status" value="1"/>
</dbReference>
<dbReference type="SUPFAM" id="SSF56801">
    <property type="entry name" value="Acetyl-CoA synthetase-like"/>
    <property type="match status" value="1"/>
</dbReference>
<comment type="function">
    <text evidence="1">Catalyzes the first step in the D-alanylation of lipoteichoic acid (LTA), the activation of D-alanine and its transfer onto the D-alanyl carrier protein (Dcp) DltC. In an ATP-dependent two-step reaction, forms a high energy D-alanyl-AMP intermediate, followed by transfer of the D-alanyl residue as a thiol ester to the phosphopantheinyl prosthetic group of the Dcp. D-alanylation of LTA plays an important role in modulating the properties of the cell wall in Gram-positive bacteria, influencing the net charge of the cell wall.</text>
</comment>
<comment type="catalytic activity">
    <reaction evidence="1">
        <text>holo-[D-alanyl-carrier protein] + D-alanine + ATP = D-alanyl-[D-alanyl-carrier protein] + AMP + diphosphate</text>
        <dbReference type="Rhea" id="RHEA:55132"/>
        <dbReference type="Rhea" id="RHEA-COMP:14102"/>
        <dbReference type="Rhea" id="RHEA-COMP:14103"/>
        <dbReference type="ChEBI" id="CHEBI:30616"/>
        <dbReference type="ChEBI" id="CHEBI:33019"/>
        <dbReference type="ChEBI" id="CHEBI:57416"/>
        <dbReference type="ChEBI" id="CHEBI:64479"/>
        <dbReference type="ChEBI" id="CHEBI:138620"/>
        <dbReference type="ChEBI" id="CHEBI:456215"/>
        <dbReference type="EC" id="6.2.1.54"/>
    </reaction>
</comment>
<comment type="pathway">
    <text evidence="1">Cell wall biogenesis; lipoteichoic acid biosynthesis.</text>
</comment>
<comment type="subcellular location">
    <subcellularLocation>
        <location evidence="1">Cytoplasm</location>
    </subcellularLocation>
</comment>
<comment type="similarity">
    <text evidence="1">Belongs to the ATP-dependent AMP-binding enzyme family. DltA subfamily.</text>
</comment>
<sequence length="485" mass="54670">MTDIINKLQAFADANPQSIAVRHTTDELTYQQLMDESSKLAHRLQGSKKPMILFGHMSPYMIVGMIGAIKAGCGYVPVDTSIPEDRIKMIINKVQPEFVFNTTDESFESLEGEVFTIEDIKTSQDPVIFDSQIKDNDTVYTIFTSGSTGEPKGVQIEYASLVQFTEWMLELNKSGNEQQWLNQAPFSFDLSVMAIYPCLASGGTLNLVDKNMINKPKLLNEMLTATPINIWVSTPSFMEMCLLLPTLNEEQYGSLNEFFFCGEILPHRAAKALVNRFPSATIYNTYGPTEATVAVTSIQITQEILDQYPTLPVGVERPGARLSTTDEGELVIEGQSVSLGYLKNDQKTAEVFNFDDGIRTYHTGDKAKFENGQWFIQGRIDFQIKLNGYRMELEEIETQLRQSEFVKEAIVVPVYKNDKVIHLIGAIVPTTEVTDNAEMTKNIKNDLKSRLPEYMIPRKFEWMEQLPLTSNGKIDRKKIAEVING</sequence>
<proteinExistence type="inferred from homology"/>